<keyword id="KW-0256">Endoplasmic reticulum</keyword>
<keyword id="KW-0472">Membrane</keyword>
<keyword id="KW-0653">Protein transport</keyword>
<keyword id="KW-1185">Reference proteome</keyword>
<keyword id="KW-0811">Translocation</keyword>
<keyword id="KW-0812">Transmembrane</keyword>
<keyword id="KW-1133">Transmembrane helix</keyword>
<keyword id="KW-0813">Transport</keyword>
<organism>
    <name type="scientific">Schizosaccharomyces pombe (strain 972 / ATCC 24843)</name>
    <name type="common">Fission yeast</name>
    <dbReference type="NCBI Taxonomy" id="284812"/>
    <lineage>
        <taxon>Eukaryota</taxon>
        <taxon>Fungi</taxon>
        <taxon>Dikarya</taxon>
        <taxon>Ascomycota</taxon>
        <taxon>Taphrinomycotina</taxon>
        <taxon>Schizosaccharomycetes</taxon>
        <taxon>Schizosaccharomycetales</taxon>
        <taxon>Schizosaccharomycetaceae</taxon>
        <taxon>Schizosaccharomyces</taxon>
    </lineage>
</organism>
<accession>O43002</accession>
<comment type="function">
    <text evidence="1">Necessary for protein translocation in the endoplasmic reticulum.</text>
</comment>
<comment type="subunit">
    <text evidence="1">Heterotrimeric complex composed of SEC61, SBH1 and SSS1.</text>
</comment>
<comment type="subcellular location">
    <subcellularLocation>
        <location evidence="4">Endoplasmic reticulum membrane</location>
        <topology evidence="4">Single-pass membrane protein</topology>
    </subcellularLocation>
</comment>
<comment type="similarity">
    <text evidence="5">Belongs to the SEC61-beta family.</text>
</comment>
<reference key="1">
    <citation type="journal article" date="2002" name="Nature">
        <title>The genome sequence of Schizosaccharomyces pombe.</title>
        <authorList>
            <person name="Wood V."/>
            <person name="Gwilliam R."/>
            <person name="Rajandream M.A."/>
            <person name="Lyne M.H."/>
            <person name="Lyne R."/>
            <person name="Stewart A."/>
            <person name="Sgouros J.G."/>
            <person name="Peat N."/>
            <person name="Hayles J."/>
            <person name="Baker S.G."/>
            <person name="Basham D."/>
            <person name="Bowman S."/>
            <person name="Brooks K."/>
            <person name="Brown D."/>
            <person name="Brown S."/>
            <person name="Chillingworth T."/>
            <person name="Churcher C.M."/>
            <person name="Collins M."/>
            <person name="Connor R."/>
            <person name="Cronin A."/>
            <person name="Davis P."/>
            <person name="Feltwell T."/>
            <person name="Fraser A."/>
            <person name="Gentles S."/>
            <person name="Goble A."/>
            <person name="Hamlin N."/>
            <person name="Harris D.E."/>
            <person name="Hidalgo J."/>
            <person name="Hodgson G."/>
            <person name="Holroyd S."/>
            <person name="Hornsby T."/>
            <person name="Howarth S."/>
            <person name="Huckle E.J."/>
            <person name="Hunt S."/>
            <person name="Jagels K."/>
            <person name="James K.D."/>
            <person name="Jones L."/>
            <person name="Jones M."/>
            <person name="Leather S."/>
            <person name="McDonald S."/>
            <person name="McLean J."/>
            <person name="Mooney P."/>
            <person name="Moule S."/>
            <person name="Mungall K.L."/>
            <person name="Murphy L.D."/>
            <person name="Niblett D."/>
            <person name="Odell C."/>
            <person name="Oliver K."/>
            <person name="O'Neil S."/>
            <person name="Pearson D."/>
            <person name="Quail M.A."/>
            <person name="Rabbinowitsch E."/>
            <person name="Rutherford K.M."/>
            <person name="Rutter S."/>
            <person name="Saunders D."/>
            <person name="Seeger K."/>
            <person name="Sharp S."/>
            <person name="Skelton J."/>
            <person name="Simmonds M.N."/>
            <person name="Squares R."/>
            <person name="Squares S."/>
            <person name="Stevens K."/>
            <person name="Taylor K."/>
            <person name="Taylor R.G."/>
            <person name="Tivey A."/>
            <person name="Walsh S.V."/>
            <person name="Warren T."/>
            <person name="Whitehead S."/>
            <person name="Woodward J.R."/>
            <person name="Volckaert G."/>
            <person name="Aert R."/>
            <person name="Robben J."/>
            <person name="Grymonprez B."/>
            <person name="Weltjens I."/>
            <person name="Vanstreels E."/>
            <person name="Rieger M."/>
            <person name="Schaefer M."/>
            <person name="Mueller-Auer S."/>
            <person name="Gabel C."/>
            <person name="Fuchs M."/>
            <person name="Duesterhoeft A."/>
            <person name="Fritzc C."/>
            <person name="Holzer E."/>
            <person name="Moestl D."/>
            <person name="Hilbert H."/>
            <person name="Borzym K."/>
            <person name="Langer I."/>
            <person name="Beck A."/>
            <person name="Lehrach H."/>
            <person name="Reinhardt R."/>
            <person name="Pohl T.M."/>
            <person name="Eger P."/>
            <person name="Zimmermann W."/>
            <person name="Wedler H."/>
            <person name="Wambutt R."/>
            <person name="Purnelle B."/>
            <person name="Goffeau A."/>
            <person name="Cadieu E."/>
            <person name="Dreano S."/>
            <person name="Gloux S."/>
            <person name="Lelaure V."/>
            <person name="Mottier S."/>
            <person name="Galibert F."/>
            <person name="Aves S.J."/>
            <person name="Xiang Z."/>
            <person name="Hunt C."/>
            <person name="Moore K."/>
            <person name="Hurst S.M."/>
            <person name="Lucas M."/>
            <person name="Rochet M."/>
            <person name="Gaillardin C."/>
            <person name="Tallada V.A."/>
            <person name="Garzon A."/>
            <person name="Thode G."/>
            <person name="Daga R.R."/>
            <person name="Cruzado L."/>
            <person name="Jimenez J."/>
            <person name="Sanchez M."/>
            <person name="del Rey F."/>
            <person name="Benito J."/>
            <person name="Dominguez A."/>
            <person name="Revuelta J.L."/>
            <person name="Moreno S."/>
            <person name="Armstrong J."/>
            <person name="Forsburg S.L."/>
            <person name="Cerutti L."/>
            <person name="Lowe T."/>
            <person name="McCombie W.R."/>
            <person name="Paulsen I."/>
            <person name="Potashkin J."/>
            <person name="Shpakovski G.V."/>
            <person name="Ussery D."/>
            <person name="Barrell B.G."/>
            <person name="Nurse P."/>
        </authorList>
    </citation>
    <scope>NUCLEOTIDE SEQUENCE [LARGE SCALE GENOMIC DNA]</scope>
    <source>
        <strain>972 / ATCC 24843</strain>
    </source>
</reference>
<reference key="2">
    <citation type="journal article" date="2006" name="Nat. Biotechnol.">
        <title>ORFeome cloning and global analysis of protein localization in the fission yeast Schizosaccharomyces pombe.</title>
        <authorList>
            <person name="Matsuyama A."/>
            <person name="Arai R."/>
            <person name="Yashiroda Y."/>
            <person name="Shirai A."/>
            <person name="Kamata A."/>
            <person name="Sekido S."/>
            <person name="Kobayashi Y."/>
            <person name="Hashimoto A."/>
            <person name="Hamamoto M."/>
            <person name="Hiraoka Y."/>
            <person name="Horinouchi S."/>
            <person name="Yoshida M."/>
        </authorList>
    </citation>
    <scope>SUBCELLULAR LOCATION [LARGE SCALE ANALYSIS]</scope>
</reference>
<protein>
    <recommendedName>
        <fullName>Protein transport protein sec61 subunit beta</fullName>
    </recommendedName>
</protein>
<name>SC61B_SCHPO</name>
<sequence length="102" mass="10444">MSSTKASGSVKNSAASAPGGPKSQIRRRAAVEKNTKESNSGPAGARAAGAPGSTPTLLKLYTDEASGFKVDPVVVMVLSVGFIASVFLLHIVARILKKFASE</sequence>
<proteinExistence type="inferred from homology"/>
<evidence type="ECO:0000250" key="1"/>
<evidence type="ECO:0000255" key="2"/>
<evidence type="ECO:0000256" key="3">
    <source>
        <dbReference type="SAM" id="MobiDB-lite"/>
    </source>
</evidence>
<evidence type="ECO:0000269" key="4">
    <source>
    </source>
</evidence>
<evidence type="ECO:0000305" key="5"/>
<gene>
    <name type="primary">sbh1</name>
    <name type="ORF">SPBC2G2.03c</name>
</gene>
<dbReference type="EMBL" id="CU329671">
    <property type="protein sequence ID" value="CAA17883.1"/>
    <property type="molecule type" value="Genomic_DNA"/>
</dbReference>
<dbReference type="PIR" id="T40142">
    <property type="entry name" value="T40142"/>
</dbReference>
<dbReference type="RefSeq" id="NP_596432.1">
    <property type="nucleotide sequence ID" value="NM_001022351.2"/>
</dbReference>
<dbReference type="BioGRID" id="276813">
    <property type="interactions" value="7"/>
</dbReference>
<dbReference type="FunCoup" id="O43002">
    <property type="interactions" value="216"/>
</dbReference>
<dbReference type="STRING" id="284812.O43002"/>
<dbReference type="iPTMnet" id="O43002"/>
<dbReference type="SwissPalm" id="O43002"/>
<dbReference type="PaxDb" id="4896-SPBC2G2.03c.1"/>
<dbReference type="EnsemblFungi" id="SPBC2G2.03c.1">
    <property type="protein sequence ID" value="SPBC2G2.03c.1:pep"/>
    <property type="gene ID" value="SPBC2G2.03c"/>
</dbReference>
<dbReference type="GeneID" id="2540282"/>
<dbReference type="KEGG" id="spo:2540282"/>
<dbReference type="PomBase" id="SPBC2G2.03c">
    <property type="gene designation" value="sbh1"/>
</dbReference>
<dbReference type="VEuPathDB" id="FungiDB:SPBC2G2.03c"/>
<dbReference type="eggNOG" id="KOG3457">
    <property type="taxonomic scope" value="Eukaryota"/>
</dbReference>
<dbReference type="HOGENOM" id="CLU_133423_1_1_1"/>
<dbReference type="InParanoid" id="O43002"/>
<dbReference type="OMA" id="SSGMWRF"/>
<dbReference type="PhylomeDB" id="O43002"/>
<dbReference type="Reactome" id="R-SPO-9609523">
    <property type="pathway name" value="Insertion of tail-anchored proteins into the endoplasmic reticulum membrane"/>
</dbReference>
<dbReference type="PRO" id="PR:O43002"/>
<dbReference type="Proteomes" id="UP000002485">
    <property type="component" value="Chromosome II"/>
</dbReference>
<dbReference type="GO" id="GO:0005783">
    <property type="term" value="C:endoplasmic reticulum"/>
    <property type="evidence" value="ECO:0007005"/>
    <property type="project" value="PomBase"/>
</dbReference>
<dbReference type="GO" id="GO:0016020">
    <property type="term" value="C:membrane"/>
    <property type="evidence" value="ECO:0000318"/>
    <property type="project" value="GO_Central"/>
</dbReference>
<dbReference type="GO" id="GO:0005784">
    <property type="term" value="C:Sec61 translocon complex"/>
    <property type="evidence" value="ECO:0000318"/>
    <property type="project" value="GO_Central"/>
</dbReference>
<dbReference type="GO" id="GO:0005085">
    <property type="term" value="F:guanyl-nucleotide exchange factor activity"/>
    <property type="evidence" value="ECO:0000318"/>
    <property type="project" value="GO_Central"/>
</dbReference>
<dbReference type="GO" id="GO:0031204">
    <property type="term" value="P:post-translational protein targeting to membrane, translocation"/>
    <property type="evidence" value="ECO:0000318"/>
    <property type="project" value="GO_Central"/>
</dbReference>
<dbReference type="GO" id="GO:0045048">
    <property type="term" value="P:protein insertion into ER membrane"/>
    <property type="evidence" value="ECO:0000305"/>
    <property type="project" value="PomBase"/>
</dbReference>
<dbReference type="GO" id="GO:0006616">
    <property type="term" value="P:SRP-dependent cotranslational protein targeting to membrane, translocation"/>
    <property type="evidence" value="ECO:0000318"/>
    <property type="project" value="GO_Central"/>
</dbReference>
<dbReference type="InterPro" id="IPR030671">
    <property type="entry name" value="Sec61-beta/Sbh"/>
</dbReference>
<dbReference type="InterPro" id="IPR016482">
    <property type="entry name" value="SecG/Sec61-beta/Sbh"/>
</dbReference>
<dbReference type="PANTHER" id="PTHR13509">
    <property type="entry name" value="SEC61 SUBUNIT BETA"/>
    <property type="match status" value="1"/>
</dbReference>
<dbReference type="Pfam" id="PF03911">
    <property type="entry name" value="Sec61_beta"/>
    <property type="match status" value="1"/>
</dbReference>
<dbReference type="PIRSF" id="PIRSF006398">
    <property type="entry name" value="Sec61_beta_euk"/>
    <property type="match status" value="1"/>
</dbReference>
<feature type="chain" id="PRO_0000157259" description="Protein transport protein sec61 subunit beta">
    <location>
        <begin position="1"/>
        <end position="102"/>
    </location>
</feature>
<feature type="topological domain" description="Cytoplasmic" evidence="2">
    <location>
        <begin position="1"/>
        <end position="72"/>
    </location>
</feature>
<feature type="transmembrane region" description="Helical" evidence="2">
    <location>
        <begin position="73"/>
        <end position="93"/>
    </location>
</feature>
<feature type="region of interest" description="Disordered" evidence="3">
    <location>
        <begin position="1"/>
        <end position="53"/>
    </location>
</feature>
<feature type="compositionally biased region" description="Polar residues" evidence="3">
    <location>
        <begin position="1"/>
        <end position="15"/>
    </location>
</feature>
<feature type="compositionally biased region" description="Low complexity" evidence="3">
    <location>
        <begin position="41"/>
        <end position="52"/>
    </location>
</feature>